<reference key="1">
    <citation type="journal article" date="2006" name="Proc. Natl. Acad. Sci. U.S.A.">
        <title>Molecular genetic anatomy of inter- and intraserotype variation in the human bacterial pathogen group A Streptococcus.</title>
        <authorList>
            <person name="Beres S.B."/>
            <person name="Richter E.W."/>
            <person name="Nagiec M.J."/>
            <person name="Sumby P."/>
            <person name="Porcella S.F."/>
            <person name="DeLeo F.R."/>
            <person name="Musser J.M."/>
        </authorList>
    </citation>
    <scope>NUCLEOTIDE SEQUENCE [LARGE SCALE GENOMIC DNA]</scope>
    <source>
        <strain>MGAS10750</strain>
    </source>
</reference>
<gene>
    <name evidence="1" type="primary">rplK</name>
    <name type="ordered locus">MGAS10750_Spy0376</name>
</gene>
<evidence type="ECO:0000255" key="1">
    <source>
        <dbReference type="HAMAP-Rule" id="MF_00736"/>
    </source>
</evidence>
<evidence type="ECO:0000305" key="2"/>
<accession>Q1J835</accession>
<keyword id="KW-0488">Methylation</keyword>
<keyword id="KW-0687">Ribonucleoprotein</keyword>
<keyword id="KW-0689">Ribosomal protein</keyword>
<keyword id="KW-0694">RNA-binding</keyword>
<keyword id="KW-0699">rRNA-binding</keyword>
<feature type="chain" id="PRO_0000258225" description="Large ribosomal subunit protein uL11">
    <location>
        <begin position="1"/>
        <end position="141"/>
    </location>
</feature>
<proteinExistence type="inferred from homology"/>
<protein>
    <recommendedName>
        <fullName evidence="1">Large ribosomal subunit protein uL11</fullName>
    </recommendedName>
    <alternativeName>
        <fullName evidence="2">50S ribosomal protein L11</fullName>
    </alternativeName>
</protein>
<organism>
    <name type="scientific">Streptococcus pyogenes serotype M4 (strain MGAS10750)</name>
    <dbReference type="NCBI Taxonomy" id="370554"/>
    <lineage>
        <taxon>Bacteria</taxon>
        <taxon>Bacillati</taxon>
        <taxon>Bacillota</taxon>
        <taxon>Bacilli</taxon>
        <taxon>Lactobacillales</taxon>
        <taxon>Streptococcaceae</taxon>
        <taxon>Streptococcus</taxon>
    </lineage>
</organism>
<sequence>MAKKVEKLVKLQIPAGKATPAPPVGPALGQAGINIMGFTKEFNARTADQAGMIIPVVISVYEDKSFDFITKTPPAAVLLKKAAGVEKGSGTPNTTKVATVTRAQVQEIAETKMPDLNAANIEAAMRMIEGTARSMGFTVTD</sequence>
<name>RL11_STRPF</name>
<dbReference type="EMBL" id="CP000262">
    <property type="protein sequence ID" value="ABF37326.1"/>
    <property type="status" value="ALT_INIT"/>
    <property type="molecule type" value="Genomic_DNA"/>
</dbReference>
<dbReference type="SMR" id="Q1J835"/>
<dbReference type="KEGG" id="spi:MGAS10750_Spy0376"/>
<dbReference type="HOGENOM" id="CLU_074237_2_1_9"/>
<dbReference type="Proteomes" id="UP000002434">
    <property type="component" value="Chromosome"/>
</dbReference>
<dbReference type="GO" id="GO:0022625">
    <property type="term" value="C:cytosolic large ribosomal subunit"/>
    <property type="evidence" value="ECO:0007669"/>
    <property type="project" value="TreeGrafter"/>
</dbReference>
<dbReference type="GO" id="GO:0070180">
    <property type="term" value="F:large ribosomal subunit rRNA binding"/>
    <property type="evidence" value="ECO:0007669"/>
    <property type="project" value="UniProtKB-UniRule"/>
</dbReference>
<dbReference type="GO" id="GO:0003735">
    <property type="term" value="F:structural constituent of ribosome"/>
    <property type="evidence" value="ECO:0007669"/>
    <property type="project" value="InterPro"/>
</dbReference>
<dbReference type="GO" id="GO:0006412">
    <property type="term" value="P:translation"/>
    <property type="evidence" value="ECO:0007669"/>
    <property type="project" value="UniProtKB-UniRule"/>
</dbReference>
<dbReference type="CDD" id="cd00349">
    <property type="entry name" value="Ribosomal_L11"/>
    <property type="match status" value="1"/>
</dbReference>
<dbReference type="FunFam" id="1.10.10.250:FF:000001">
    <property type="entry name" value="50S ribosomal protein L11"/>
    <property type="match status" value="1"/>
</dbReference>
<dbReference type="FunFam" id="3.30.1550.10:FF:000001">
    <property type="entry name" value="50S ribosomal protein L11"/>
    <property type="match status" value="1"/>
</dbReference>
<dbReference type="Gene3D" id="1.10.10.250">
    <property type="entry name" value="Ribosomal protein L11, C-terminal domain"/>
    <property type="match status" value="1"/>
</dbReference>
<dbReference type="Gene3D" id="3.30.1550.10">
    <property type="entry name" value="Ribosomal protein L11/L12, N-terminal domain"/>
    <property type="match status" value="1"/>
</dbReference>
<dbReference type="HAMAP" id="MF_00736">
    <property type="entry name" value="Ribosomal_uL11"/>
    <property type="match status" value="1"/>
</dbReference>
<dbReference type="InterPro" id="IPR000911">
    <property type="entry name" value="Ribosomal_uL11"/>
</dbReference>
<dbReference type="InterPro" id="IPR006519">
    <property type="entry name" value="Ribosomal_uL11_bac-typ"/>
</dbReference>
<dbReference type="InterPro" id="IPR020783">
    <property type="entry name" value="Ribosomal_uL11_C"/>
</dbReference>
<dbReference type="InterPro" id="IPR036769">
    <property type="entry name" value="Ribosomal_uL11_C_sf"/>
</dbReference>
<dbReference type="InterPro" id="IPR020785">
    <property type="entry name" value="Ribosomal_uL11_CS"/>
</dbReference>
<dbReference type="InterPro" id="IPR020784">
    <property type="entry name" value="Ribosomal_uL11_N"/>
</dbReference>
<dbReference type="InterPro" id="IPR036796">
    <property type="entry name" value="Ribosomal_uL11_N_sf"/>
</dbReference>
<dbReference type="NCBIfam" id="TIGR01632">
    <property type="entry name" value="L11_bact"/>
    <property type="match status" value="1"/>
</dbReference>
<dbReference type="PANTHER" id="PTHR11661">
    <property type="entry name" value="60S RIBOSOMAL PROTEIN L12"/>
    <property type="match status" value="1"/>
</dbReference>
<dbReference type="PANTHER" id="PTHR11661:SF1">
    <property type="entry name" value="LARGE RIBOSOMAL SUBUNIT PROTEIN UL11M"/>
    <property type="match status" value="1"/>
</dbReference>
<dbReference type="Pfam" id="PF00298">
    <property type="entry name" value="Ribosomal_L11"/>
    <property type="match status" value="1"/>
</dbReference>
<dbReference type="Pfam" id="PF03946">
    <property type="entry name" value="Ribosomal_L11_N"/>
    <property type="match status" value="1"/>
</dbReference>
<dbReference type="SMART" id="SM00649">
    <property type="entry name" value="RL11"/>
    <property type="match status" value="1"/>
</dbReference>
<dbReference type="SUPFAM" id="SSF54747">
    <property type="entry name" value="Ribosomal L11/L12e N-terminal domain"/>
    <property type="match status" value="1"/>
</dbReference>
<dbReference type="SUPFAM" id="SSF46906">
    <property type="entry name" value="Ribosomal protein L11, C-terminal domain"/>
    <property type="match status" value="1"/>
</dbReference>
<dbReference type="PROSITE" id="PS00359">
    <property type="entry name" value="RIBOSOMAL_L11"/>
    <property type="match status" value="1"/>
</dbReference>
<comment type="function">
    <text evidence="1">Forms part of the ribosomal stalk which helps the ribosome interact with GTP-bound translation factors.</text>
</comment>
<comment type="subunit">
    <text evidence="1">Part of the ribosomal stalk of the 50S ribosomal subunit. Interacts with L10 and the large rRNA to form the base of the stalk. L10 forms an elongated spine to which L12 dimers bind in a sequential fashion forming a multimeric L10(L12)X complex.</text>
</comment>
<comment type="PTM">
    <text evidence="1">One or more lysine residues are methylated.</text>
</comment>
<comment type="similarity">
    <text evidence="1">Belongs to the universal ribosomal protein uL11 family.</text>
</comment>
<comment type="sequence caution" evidence="2">
    <conflict type="erroneous initiation">
        <sequence resource="EMBL-CDS" id="ABF37326"/>
    </conflict>
</comment>